<sequence length="232" mass="24615">MQKNAAHTYAISSLLVLSLTGCAWIPSTPLVQGATSAQPVPGPTPVANGSIFQSAQPINYGYQPLFEDRRPRNIGDTLTIVLQENVSASKSSSANASRDGKTNFGFDTVPRYLQGLFGNARADVEASGGNTFNGKGGANASNTFSGTLTVTVDQVLVNGNLHVVGEKQIAINQGTEFIRFSGVVNPRTISGSNTVPSTQVADARIEYVGNGYINEAQNMGWLQRFFLNLSPM</sequence>
<comment type="function">
    <text evidence="1">Assembles around the rod to form the L-ring and probably protects the motor/basal body from shearing forces during rotation.</text>
</comment>
<comment type="subunit">
    <text evidence="1">The basal body constitutes a major portion of the flagellar organelle and consists of four rings (L,P,S, and M) mounted on a central rod.</text>
</comment>
<comment type="subcellular location">
    <subcellularLocation>
        <location evidence="1">Cell outer membrane</location>
        <topology evidence="1">Lipid-anchor</topology>
    </subcellularLocation>
    <subcellularLocation>
        <location evidence="1">Bacterial flagellum basal body</location>
    </subcellularLocation>
</comment>
<comment type="similarity">
    <text evidence="1">Belongs to the FlgH family.</text>
</comment>
<dbReference type="EMBL" id="CP000802">
    <property type="protein sequence ID" value="ABV05541.1"/>
    <property type="molecule type" value="Genomic_DNA"/>
</dbReference>
<dbReference type="RefSeq" id="WP_001295442.1">
    <property type="nucleotide sequence ID" value="NC_009800.1"/>
</dbReference>
<dbReference type="SMR" id="A7ZZ37"/>
<dbReference type="GeneID" id="93776328"/>
<dbReference type="KEGG" id="ecx:EcHS_A1202"/>
<dbReference type="HOGENOM" id="CLU_069313_0_0_6"/>
<dbReference type="GO" id="GO:0009427">
    <property type="term" value="C:bacterial-type flagellum basal body, distal rod, L ring"/>
    <property type="evidence" value="ECO:0007669"/>
    <property type="project" value="InterPro"/>
</dbReference>
<dbReference type="GO" id="GO:0009279">
    <property type="term" value="C:cell outer membrane"/>
    <property type="evidence" value="ECO:0007669"/>
    <property type="project" value="UniProtKB-SubCell"/>
</dbReference>
<dbReference type="GO" id="GO:0003774">
    <property type="term" value="F:cytoskeletal motor activity"/>
    <property type="evidence" value="ECO:0007669"/>
    <property type="project" value="InterPro"/>
</dbReference>
<dbReference type="GO" id="GO:0071973">
    <property type="term" value="P:bacterial-type flagellum-dependent cell motility"/>
    <property type="evidence" value="ECO:0007669"/>
    <property type="project" value="InterPro"/>
</dbReference>
<dbReference type="HAMAP" id="MF_00415">
    <property type="entry name" value="FlgH"/>
    <property type="match status" value="1"/>
</dbReference>
<dbReference type="InterPro" id="IPR000527">
    <property type="entry name" value="Flag_Lring"/>
</dbReference>
<dbReference type="NCBIfam" id="NF001301">
    <property type="entry name" value="PRK00249.1-1"/>
    <property type="match status" value="1"/>
</dbReference>
<dbReference type="PANTHER" id="PTHR34933">
    <property type="entry name" value="FLAGELLAR L-RING PROTEIN"/>
    <property type="match status" value="1"/>
</dbReference>
<dbReference type="PANTHER" id="PTHR34933:SF3">
    <property type="entry name" value="FLAGELLAR L-RING PROTEIN"/>
    <property type="match status" value="1"/>
</dbReference>
<dbReference type="Pfam" id="PF02107">
    <property type="entry name" value="FlgH"/>
    <property type="match status" value="1"/>
</dbReference>
<dbReference type="PRINTS" id="PR01008">
    <property type="entry name" value="FLGLRINGFLGH"/>
</dbReference>
<dbReference type="PROSITE" id="PS51257">
    <property type="entry name" value="PROKAR_LIPOPROTEIN"/>
    <property type="match status" value="1"/>
</dbReference>
<reference key="1">
    <citation type="journal article" date="2008" name="J. Bacteriol.">
        <title>The pangenome structure of Escherichia coli: comparative genomic analysis of E. coli commensal and pathogenic isolates.</title>
        <authorList>
            <person name="Rasko D.A."/>
            <person name="Rosovitz M.J."/>
            <person name="Myers G.S.A."/>
            <person name="Mongodin E.F."/>
            <person name="Fricke W.F."/>
            <person name="Gajer P."/>
            <person name="Crabtree J."/>
            <person name="Sebaihia M."/>
            <person name="Thomson N.R."/>
            <person name="Chaudhuri R."/>
            <person name="Henderson I.R."/>
            <person name="Sperandio V."/>
            <person name="Ravel J."/>
        </authorList>
    </citation>
    <scope>NUCLEOTIDE SEQUENCE [LARGE SCALE GENOMIC DNA]</scope>
    <source>
        <strain>HS</strain>
    </source>
</reference>
<feature type="signal peptide" evidence="1">
    <location>
        <begin position="1"/>
        <end position="21"/>
    </location>
</feature>
<feature type="chain" id="PRO_1000060073" description="Flagellar L-ring protein">
    <location>
        <begin position="22"/>
        <end position="232"/>
    </location>
</feature>
<feature type="lipid moiety-binding region" description="N-palmitoyl cysteine" evidence="1">
    <location>
        <position position="22"/>
    </location>
</feature>
<feature type="lipid moiety-binding region" description="S-diacylglycerol cysteine" evidence="1">
    <location>
        <position position="22"/>
    </location>
</feature>
<evidence type="ECO:0000255" key="1">
    <source>
        <dbReference type="HAMAP-Rule" id="MF_00415"/>
    </source>
</evidence>
<organism>
    <name type="scientific">Escherichia coli O9:H4 (strain HS)</name>
    <dbReference type="NCBI Taxonomy" id="331112"/>
    <lineage>
        <taxon>Bacteria</taxon>
        <taxon>Pseudomonadati</taxon>
        <taxon>Pseudomonadota</taxon>
        <taxon>Gammaproteobacteria</taxon>
        <taxon>Enterobacterales</taxon>
        <taxon>Enterobacteriaceae</taxon>
        <taxon>Escherichia</taxon>
    </lineage>
</organism>
<accession>A7ZZ37</accession>
<proteinExistence type="inferred from homology"/>
<keyword id="KW-0975">Bacterial flagellum</keyword>
<keyword id="KW-0998">Cell outer membrane</keyword>
<keyword id="KW-0449">Lipoprotein</keyword>
<keyword id="KW-0472">Membrane</keyword>
<keyword id="KW-0564">Palmitate</keyword>
<keyword id="KW-0732">Signal</keyword>
<gene>
    <name evidence="1" type="primary">flgH</name>
    <name type="ordered locus">EcHS_A1202</name>
</gene>
<protein>
    <recommendedName>
        <fullName evidence="1">Flagellar L-ring protein</fullName>
    </recommendedName>
    <alternativeName>
        <fullName evidence="1">Basal body L-ring protein</fullName>
    </alternativeName>
</protein>
<name>FLGH_ECOHS</name>